<proteinExistence type="inferred from homology"/>
<reference key="1">
    <citation type="journal article" date="2004" name="Nat. Biotechnol.">
        <title>Complete sequence and comparative genome analysis of the dairy bacterium Streptococcus thermophilus.</title>
        <authorList>
            <person name="Bolotin A."/>
            <person name="Quinquis B."/>
            <person name="Renault P."/>
            <person name="Sorokin A."/>
            <person name="Ehrlich S.D."/>
            <person name="Kulakauskas S."/>
            <person name="Lapidus A."/>
            <person name="Goltsman E."/>
            <person name="Mazur M."/>
            <person name="Pusch G.D."/>
            <person name="Fonstein M."/>
            <person name="Overbeek R."/>
            <person name="Kyprides N."/>
            <person name="Purnelle B."/>
            <person name="Prozzi D."/>
            <person name="Ngui K."/>
            <person name="Masuy D."/>
            <person name="Hancy F."/>
            <person name="Burteau S."/>
            <person name="Boutry M."/>
            <person name="Delcour J."/>
            <person name="Goffeau A."/>
            <person name="Hols P."/>
        </authorList>
    </citation>
    <scope>NUCLEOTIDE SEQUENCE [LARGE SCALE GENOMIC DNA]</scope>
    <source>
        <strain>ATCC BAA-250 / LMG 18311</strain>
    </source>
</reference>
<dbReference type="EC" id="6.3.4.20" evidence="1"/>
<dbReference type="EMBL" id="CP000023">
    <property type="protein sequence ID" value="AAV60501.1"/>
    <property type="molecule type" value="Genomic_DNA"/>
</dbReference>
<dbReference type="RefSeq" id="WP_002946194.1">
    <property type="nucleotide sequence ID" value="NC_006448.1"/>
</dbReference>
<dbReference type="SMR" id="Q5M4S5"/>
<dbReference type="STRING" id="264199.stu0825"/>
<dbReference type="GeneID" id="66898711"/>
<dbReference type="KEGG" id="stl:stu0825"/>
<dbReference type="PATRIC" id="fig|264199.4.peg.821"/>
<dbReference type="eggNOG" id="COG0603">
    <property type="taxonomic scope" value="Bacteria"/>
</dbReference>
<dbReference type="HOGENOM" id="CLU_081854_0_0_9"/>
<dbReference type="UniPathway" id="UPA00391"/>
<dbReference type="Proteomes" id="UP000001170">
    <property type="component" value="Chromosome"/>
</dbReference>
<dbReference type="GO" id="GO:0005524">
    <property type="term" value="F:ATP binding"/>
    <property type="evidence" value="ECO:0007669"/>
    <property type="project" value="UniProtKB-UniRule"/>
</dbReference>
<dbReference type="GO" id="GO:0016879">
    <property type="term" value="F:ligase activity, forming carbon-nitrogen bonds"/>
    <property type="evidence" value="ECO:0007669"/>
    <property type="project" value="UniProtKB-UniRule"/>
</dbReference>
<dbReference type="GO" id="GO:0008270">
    <property type="term" value="F:zinc ion binding"/>
    <property type="evidence" value="ECO:0007669"/>
    <property type="project" value="UniProtKB-UniRule"/>
</dbReference>
<dbReference type="GO" id="GO:0008616">
    <property type="term" value="P:queuosine biosynthetic process"/>
    <property type="evidence" value="ECO:0007669"/>
    <property type="project" value="UniProtKB-UniRule"/>
</dbReference>
<dbReference type="CDD" id="cd01995">
    <property type="entry name" value="QueC-like"/>
    <property type="match status" value="1"/>
</dbReference>
<dbReference type="FunFam" id="3.40.50.620:FF:000017">
    <property type="entry name" value="7-cyano-7-deazaguanine synthase"/>
    <property type="match status" value="1"/>
</dbReference>
<dbReference type="Gene3D" id="3.40.50.620">
    <property type="entry name" value="HUPs"/>
    <property type="match status" value="1"/>
</dbReference>
<dbReference type="HAMAP" id="MF_01633">
    <property type="entry name" value="QueC"/>
    <property type="match status" value="1"/>
</dbReference>
<dbReference type="InterPro" id="IPR018317">
    <property type="entry name" value="QueC"/>
</dbReference>
<dbReference type="InterPro" id="IPR014729">
    <property type="entry name" value="Rossmann-like_a/b/a_fold"/>
</dbReference>
<dbReference type="NCBIfam" id="TIGR00364">
    <property type="entry name" value="7-cyano-7-deazaguanine synthase QueC"/>
    <property type="match status" value="1"/>
</dbReference>
<dbReference type="PANTHER" id="PTHR42914">
    <property type="entry name" value="7-CYANO-7-DEAZAGUANINE SYNTHASE"/>
    <property type="match status" value="1"/>
</dbReference>
<dbReference type="PANTHER" id="PTHR42914:SF1">
    <property type="entry name" value="7-CYANO-7-DEAZAGUANINE SYNTHASE"/>
    <property type="match status" value="1"/>
</dbReference>
<dbReference type="Pfam" id="PF06508">
    <property type="entry name" value="QueC"/>
    <property type="match status" value="1"/>
</dbReference>
<dbReference type="PIRSF" id="PIRSF006293">
    <property type="entry name" value="ExsB"/>
    <property type="match status" value="1"/>
</dbReference>
<dbReference type="SUPFAM" id="SSF52402">
    <property type="entry name" value="Adenine nucleotide alpha hydrolases-like"/>
    <property type="match status" value="1"/>
</dbReference>
<protein>
    <recommendedName>
        <fullName evidence="1">7-cyano-7-deazaguanine synthase</fullName>
        <ecNumber evidence="1">6.3.4.20</ecNumber>
    </recommendedName>
    <alternativeName>
        <fullName evidence="1">7-cyano-7-carbaguanine synthase</fullName>
    </alternativeName>
    <alternativeName>
        <fullName evidence="1">PreQ(0) synthase</fullName>
    </alternativeName>
    <alternativeName>
        <fullName evidence="1">Queuosine biosynthesis protein QueC</fullName>
    </alternativeName>
</protein>
<keyword id="KW-0067">ATP-binding</keyword>
<keyword id="KW-0436">Ligase</keyword>
<keyword id="KW-0479">Metal-binding</keyword>
<keyword id="KW-0547">Nucleotide-binding</keyword>
<keyword id="KW-0671">Queuosine biosynthesis</keyword>
<keyword id="KW-1185">Reference proteome</keyword>
<keyword id="KW-0862">Zinc</keyword>
<organism>
    <name type="scientific">Streptococcus thermophilus (strain ATCC BAA-250 / LMG 18311)</name>
    <dbReference type="NCBI Taxonomy" id="264199"/>
    <lineage>
        <taxon>Bacteria</taxon>
        <taxon>Bacillati</taxon>
        <taxon>Bacillota</taxon>
        <taxon>Bacilli</taxon>
        <taxon>Lactobacillales</taxon>
        <taxon>Streptococcaceae</taxon>
        <taxon>Streptococcus</taxon>
    </lineage>
</organism>
<name>QUEC_STRT2</name>
<feature type="chain" id="PRO_0000246942" description="7-cyano-7-deazaguanine synthase">
    <location>
        <begin position="1"/>
        <end position="217"/>
    </location>
</feature>
<feature type="binding site" evidence="1">
    <location>
        <begin position="10"/>
        <end position="20"/>
    </location>
    <ligand>
        <name>ATP</name>
        <dbReference type="ChEBI" id="CHEBI:30616"/>
    </ligand>
</feature>
<feature type="binding site" evidence="1">
    <location>
        <position position="185"/>
    </location>
    <ligand>
        <name>Zn(2+)</name>
        <dbReference type="ChEBI" id="CHEBI:29105"/>
    </ligand>
</feature>
<feature type="binding site" evidence="1">
    <location>
        <position position="194"/>
    </location>
    <ligand>
        <name>Zn(2+)</name>
        <dbReference type="ChEBI" id="CHEBI:29105"/>
    </ligand>
</feature>
<feature type="binding site" evidence="1">
    <location>
        <position position="197"/>
    </location>
    <ligand>
        <name>Zn(2+)</name>
        <dbReference type="ChEBI" id="CHEBI:29105"/>
    </ligand>
</feature>
<feature type="binding site" evidence="1">
    <location>
        <position position="200"/>
    </location>
    <ligand>
        <name>Zn(2+)</name>
        <dbReference type="ChEBI" id="CHEBI:29105"/>
    </ligand>
</feature>
<evidence type="ECO:0000255" key="1">
    <source>
        <dbReference type="HAMAP-Rule" id="MF_01633"/>
    </source>
</evidence>
<comment type="function">
    <text evidence="1">Catalyzes the ATP-dependent conversion of 7-carboxy-7-deazaguanine (CDG) to 7-cyano-7-deazaguanine (preQ(0)).</text>
</comment>
<comment type="catalytic activity">
    <reaction evidence="1">
        <text>7-carboxy-7-deazaguanine + NH4(+) + ATP = 7-cyano-7-deazaguanine + ADP + phosphate + H2O + H(+)</text>
        <dbReference type="Rhea" id="RHEA:27982"/>
        <dbReference type="ChEBI" id="CHEBI:15377"/>
        <dbReference type="ChEBI" id="CHEBI:15378"/>
        <dbReference type="ChEBI" id="CHEBI:28938"/>
        <dbReference type="ChEBI" id="CHEBI:30616"/>
        <dbReference type="ChEBI" id="CHEBI:43474"/>
        <dbReference type="ChEBI" id="CHEBI:45075"/>
        <dbReference type="ChEBI" id="CHEBI:61036"/>
        <dbReference type="ChEBI" id="CHEBI:456216"/>
        <dbReference type="EC" id="6.3.4.20"/>
    </reaction>
</comment>
<comment type="cofactor">
    <cofactor evidence="1">
        <name>Zn(2+)</name>
        <dbReference type="ChEBI" id="CHEBI:29105"/>
    </cofactor>
    <text evidence="1">Binds 1 zinc ion per subunit.</text>
</comment>
<comment type="pathway">
    <text evidence="1">Purine metabolism; 7-cyano-7-deazaguanine biosynthesis.</text>
</comment>
<comment type="subunit">
    <text evidence="1">Homodimer.</text>
</comment>
<comment type="similarity">
    <text evidence="1">Belongs to the QueC family.</text>
</comment>
<accession>Q5M4S5</accession>
<sequence>MKRQSALVVFSGGQDSTTCLFWALKHYETVELVTFAYGQRHSLEIEVAKEIAQEQGLKHHVLDMSLLGQITENALTSDIEIEAEKGEVPNTFVDGRNHLFLSFAAVLAKQRGIIDIVTGVCETDFSGYPDCRDVFVKSLNVTLNLAMAYDFVIQTPLMWLDKAETWALADQLGAFDYVREKTLTCYNGIIGTGCGDCPACHLRQKGLEKYLAEKGDA</sequence>
<gene>
    <name evidence="1" type="primary">queC</name>
    <name type="ordered locus">stu0825</name>
</gene>